<sequence length="416" mass="46557">MLQRVNPGHKALADYRSIIRRELYGELQELAGRLRGARVLHINATSFGGGVAEILYTLVPLARDAGLEVEWAIMFGAEPFFNVTKRFHNALQGADYELTIEDRAIYEEYNRRTAQALAESGEEWDIVFVHDPQPALVREFSGGLGEGTRWIWRCHIDTSTPNRQVLDYLWPYIADYDAQVYTMREYTPPGVEMPGLTLIPPAIDPLSPKNMALSRDDASYIVSQFGVDVERPFLLQVSRFDPWKDPLGVIDVYRMVKEEVGEVQLVLVGSMAHDDPEGWDYWYKTVNYAGGDPDIFLFSNLTNVGAIEVNAFQSLADVVIQKSIREGFGLVVSEALWKARPVVASRVGGIPMQITAGGGILIDTIPEAAAACAKLLSDPEFAREMGRRGKEHVRANFLTPRLLRDDLRLFAKLLGV</sequence>
<name>TRET_RUBXD</name>
<gene>
    <name evidence="5" type="primary">treT</name>
    <name type="ordered locus">Rxyl_2973</name>
</gene>
<evidence type="ECO:0000250" key="1">
    <source>
        <dbReference type="UniProtKB" id="Q7LYW5"/>
    </source>
</evidence>
<evidence type="ECO:0000269" key="2">
    <source>
    </source>
</evidence>
<evidence type="ECO:0000305" key="3"/>
<evidence type="ECO:0000312" key="4">
    <source>
        <dbReference type="EMBL" id="ABG05883.1"/>
    </source>
</evidence>
<evidence type="ECO:0000312" key="5">
    <source>
        <dbReference type="EMBL" id="ACJ76775.1"/>
    </source>
</evidence>
<protein>
    <recommendedName>
        <fullName evidence="1">Trehalose synthase</fullName>
        <ecNumber>2.4.1.245</ecNumber>
    </recommendedName>
    <alternativeName>
        <fullName evidence="5">Trehalose glycosyltransferring synthase</fullName>
    </alternativeName>
</protein>
<accession>Q1ARU5</accession>
<accession>B8R7Q1</accession>
<feature type="chain" id="PRO_0000405301" description="Trehalose synthase">
    <location>
        <begin position="1"/>
        <end position="416"/>
    </location>
</feature>
<feature type="sequence conflict" description="In Ref. 1; ACJ76775." evidence="3" ref="1">
    <original>R</original>
    <variation>H</variation>
    <location>
        <position position="20"/>
    </location>
</feature>
<feature type="sequence conflict" description="In Ref. 1; ACJ76775." evidence="3" ref="1">
    <original>G</original>
    <variation>E</variation>
    <location>
        <position position="25"/>
    </location>
</feature>
<feature type="sequence conflict" description="In Ref. 1; ACJ76775." evidence="3" ref="1">
    <original>I</original>
    <variation>V</variation>
    <location>
        <position position="42"/>
    </location>
</feature>
<feature type="sequence conflict" description="In Ref. 1; ACJ76775." evidence="3" ref="1">
    <original>R</original>
    <variation>L</variation>
    <location>
        <position position="63"/>
    </location>
</feature>
<feature type="sequence conflict" description="In Ref. 1; ACJ76775." evidence="3" ref="1">
    <original>Q</original>
    <variation>R</variation>
    <location>
        <position position="115"/>
    </location>
</feature>
<feature type="sequence conflict" description="In Ref. 1; ACJ76775." evidence="3" ref="1">
    <original>V</original>
    <variation>I</variation>
    <location>
        <position position="129"/>
    </location>
</feature>
<feature type="sequence conflict" description="In Ref. 1; ACJ76775." evidence="3" ref="1">
    <original>G</original>
    <variation>R</variation>
    <location>
        <position position="145"/>
    </location>
</feature>
<feature type="sequence conflict" description="In Ref. 1; ACJ76775." evidence="3" ref="1">
    <original>M</original>
    <variation>L</variation>
    <location>
        <position position="193"/>
    </location>
</feature>
<feature type="sequence conflict" description="In Ref. 1; ACJ76775." evidence="3" ref="1">
    <original>VE</original>
    <variation>TG</variation>
    <location>
        <begin position="229"/>
        <end position="230"/>
    </location>
</feature>
<feature type="sequence conflict" description="In Ref. 1; ACJ76775." evidence="3" ref="1">
    <original>K</original>
    <variation>R</variation>
    <location>
        <position position="257"/>
    </location>
</feature>
<feature type="sequence conflict" description="In Ref. 1; ACJ76775." evidence="3" ref="1">
    <original>G</original>
    <variation>P</variation>
    <location>
        <position position="261"/>
    </location>
</feature>
<feature type="sequence conflict" description="In Ref. 1; ACJ76775." evidence="3" ref="1">
    <original>A</original>
    <variation>S</variation>
    <location>
        <position position="356"/>
    </location>
</feature>
<feature type="sequence conflict" description="In Ref. 1; ACJ76775." evidence="3" ref="1">
    <original>E</original>
    <variation>D</variation>
    <location>
        <position position="380"/>
    </location>
</feature>
<feature type="sequence conflict" description="In Ref. 1; ACJ76775." evidence="3" ref="1">
    <original>D</original>
    <variation>E</variation>
    <location>
        <position position="406"/>
    </location>
</feature>
<comment type="function">
    <text evidence="2">Synthesizes trehalose from ADP-glucose and glucose. The reaction is reversible, the equilibrium strongly favors trehalose synthesis.</text>
</comment>
<comment type="catalytic activity">
    <reaction evidence="2">
        <text>an NDP-alpha-D-glucose + D-glucose = alpha,alpha-trehalose + a ribonucleoside 5'-diphosphate + H(+)</text>
        <dbReference type="Rhea" id="RHEA:47416"/>
        <dbReference type="ChEBI" id="CHEBI:4167"/>
        <dbReference type="ChEBI" id="CHEBI:15378"/>
        <dbReference type="ChEBI" id="CHEBI:16551"/>
        <dbReference type="ChEBI" id="CHEBI:57930"/>
        <dbReference type="ChEBI" id="CHEBI:76533"/>
        <dbReference type="EC" id="2.4.1.245"/>
    </reaction>
</comment>
<comment type="cofactor">
    <cofactor evidence="1">
        <name>Mg(2+)</name>
        <dbReference type="ChEBI" id="CHEBI:18420"/>
    </cofactor>
</comment>
<comment type="activity regulation">
    <text evidence="2">Inhibited by 20 mM Fe(3+) and Mn(2+). Partially inhibited by Zn(2+) and Ni(2+). Activity is slightly enhanced by 2 mM Fe (3+), Mn (2+), Ca(2+) or Li(+) and by 20 mM Mg(2+), Ca(2+) or Li(+).</text>
</comment>
<comment type="biophysicochemical properties">
    <kinetics>
        <KM evidence="2">0.8 mM for ADP-glucose</KM>
        <KM evidence="2">1.3 mM for glucose</KM>
        <KM evidence="2">82 mM for trehalose</KM>
        <KM evidence="2">6.8 mM for ADP</KM>
        <Vmax evidence="2">37.0 umol/min/mg enzyme for the synthesis of trehalose</Vmax>
    </kinetics>
    <phDependence>
        <text evidence="2">Optimum pH is 8.0-10.0.</text>
    </phDependence>
    <temperatureDependence>
        <text evidence="2">Optimum temperature is 60 degrees Celsius. Active between 20 and 80 degrees Celsius. Half-life at 60 degrees Celsius is 309 hours. Half-life at 70 degrees Celsius is 4.1 hours.</text>
    </temperatureDependence>
</comment>
<comment type="subunit">
    <text evidence="1">Homodimer.</text>
</comment>
<comment type="similarity">
    <text evidence="3">Belongs to the glycosyltransferase group 1 family. Glycosyltransferase 4 subfamily.</text>
</comment>
<reference evidence="3 5" key="1">
    <citation type="journal article" date="2008" name="J. Bacteriol.">
        <title>A unique combination of genetic systems for the synthesis of trehalose in Rubrobacter xylanophilus: properties of a rare actinobacterial TreT.</title>
        <authorList>
            <person name="Nobre A."/>
            <person name="Alarico S."/>
            <person name="Fernandes C."/>
            <person name="Empadinhas N."/>
            <person name="da Costa M.S."/>
        </authorList>
    </citation>
    <scope>NUCLEOTIDE SEQUENCE [GENOMIC DNA]</scope>
    <scope>FUNCTION</scope>
    <scope>CATALYTIC ACTIVITY</scope>
    <scope>ACTIVITY REGULATION</scope>
    <scope>BIOPHYSICOCHEMICAL PROPERTIES</scope>
</reference>
<reference evidence="4" key="2">
    <citation type="submission" date="2006-06" db="EMBL/GenBank/DDBJ databases">
        <title>Complete sequence of Rubrobacter xylanophilus DSM 9941.</title>
        <authorList>
            <consortium name="US DOE Joint Genome Institute"/>
            <person name="Copeland A."/>
            <person name="Lucas S."/>
            <person name="Lapidus A."/>
            <person name="Barry K."/>
            <person name="Detter J.C."/>
            <person name="Glavina del Rio T."/>
            <person name="Hammon N."/>
            <person name="Israni S."/>
            <person name="Dalin E."/>
            <person name="Tice H."/>
            <person name="Pitluck S."/>
            <person name="Munk A.C."/>
            <person name="Brettin T."/>
            <person name="Bruce D."/>
            <person name="Han C."/>
            <person name="Tapia R."/>
            <person name="Gilna P."/>
            <person name="Schmutz J."/>
            <person name="Larimer F."/>
            <person name="Land M."/>
            <person name="Hauser L."/>
            <person name="Kyrpides N."/>
            <person name="Lykidis A."/>
            <person name="da Costa M.S."/>
            <person name="Rainey F.A."/>
            <person name="Empadinhas N."/>
            <person name="Jolivet E."/>
            <person name="Battista J.R."/>
            <person name="Richardson P."/>
        </authorList>
    </citation>
    <scope>NUCLEOTIDE SEQUENCE [LARGE SCALE GENOMIC DNA]</scope>
    <source>
        <strain>DSM 9941 / JCM 11954 / NBRC 16129 / PRD-1</strain>
    </source>
</reference>
<proteinExistence type="evidence at protein level"/>
<keyword id="KW-0119">Carbohydrate metabolism</keyword>
<keyword id="KW-0313">Glucose metabolism</keyword>
<keyword id="KW-0328">Glycosyltransferase</keyword>
<keyword id="KW-0460">Magnesium</keyword>
<keyword id="KW-1185">Reference proteome</keyword>
<keyword id="KW-0808">Transferase</keyword>
<dbReference type="EC" id="2.4.1.245"/>
<dbReference type="EMBL" id="EU881704">
    <property type="protein sequence ID" value="ACJ76775.1"/>
    <property type="molecule type" value="Genomic_DNA"/>
</dbReference>
<dbReference type="EMBL" id="CP000386">
    <property type="protein sequence ID" value="ABG05883.1"/>
    <property type="molecule type" value="Genomic_DNA"/>
</dbReference>
<dbReference type="RefSeq" id="WP_011565892.1">
    <property type="nucleotide sequence ID" value="NC_008148.1"/>
</dbReference>
<dbReference type="SMR" id="Q1ARU5"/>
<dbReference type="STRING" id="266117.Rxyl_2973"/>
<dbReference type="CAZy" id="GT4">
    <property type="family name" value="Glycosyltransferase Family 4"/>
</dbReference>
<dbReference type="KEGG" id="rxy:Rxyl_2973"/>
<dbReference type="eggNOG" id="COG0438">
    <property type="taxonomic scope" value="Bacteria"/>
</dbReference>
<dbReference type="HOGENOM" id="CLU_045353_0_0_11"/>
<dbReference type="OrthoDB" id="9772485at2"/>
<dbReference type="PhylomeDB" id="Q1ARU5"/>
<dbReference type="BRENDA" id="2.4.1.245">
    <property type="organism ID" value="10017"/>
</dbReference>
<dbReference type="Proteomes" id="UP000006637">
    <property type="component" value="Chromosome"/>
</dbReference>
<dbReference type="GO" id="GO:0102986">
    <property type="term" value="F:trehalose synthase activity"/>
    <property type="evidence" value="ECO:0007669"/>
    <property type="project" value="UniProtKB-EC"/>
</dbReference>
<dbReference type="GO" id="GO:0006006">
    <property type="term" value="P:glucose metabolic process"/>
    <property type="evidence" value="ECO:0007669"/>
    <property type="project" value="UniProtKB-KW"/>
</dbReference>
<dbReference type="Gene3D" id="3.40.50.2000">
    <property type="entry name" value="Glycogen Phosphorylase B"/>
    <property type="match status" value="2"/>
</dbReference>
<dbReference type="InterPro" id="IPR001296">
    <property type="entry name" value="Glyco_trans_1"/>
</dbReference>
<dbReference type="InterPro" id="IPR052078">
    <property type="entry name" value="Trehalose_Metab_GTase"/>
</dbReference>
<dbReference type="InterPro" id="IPR049438">
    <property type="entry name" value="TreT_GT1"/>
</dbReference>
<dbReference type="PANTHER" id="PTHR47779">
    <property type="entry name" value="SYNTHASE (CCG-9), PUTATIVE (AFU_ORTHOLOGUE AFUA_3G12100)-RELATED"/>
    <property type="match status" value="1"/>
</dbReference>
<dbReference type="PANTHER" id="PTHR47779:SF1">
    <property type="entry name" value="SYNTHASE (CCG-9), PUTATIVE (AFU_ORTHOLOGUE AFUA_3G12100)-RELATED"/>
    <property type="match status" value="1"/>
</dbReference>
<dbReference type="Pfam" id="PF00534">
    <property type="entry name" value="Glycos_transf_1"/>
    <property type="match status" value="1"/>
</dbReference>
<dbReference type="Pfam" id="PF21269">
    <property type="entry name" value="TreT_GT1"/>
    <property type="match status" value="1"/>
</dbReference>
<dbReference type="SUPFAM" id="SSF53756">
    <property type="entry name" value="UDP-Glycosyltransferase/glycogen phosphorylase"/>
    <property type="match status" value="1"/>
</dbReference>
<organism>
    <name type="scientific">Rubrobacter xylanophilus (strain DSM 9941 / JCM 11954 / NBRC 16129 / PRD-1)</name>
    <dbReference type="NCBI Taxonomy" id="266117"/>
    <lineage>
        <taxon>Bacteria</taxon>
        <taxon>Bacillati</taxon>
        <taxon>Actinomycetota</taxon>
        <taxon>Rubrobacteria</taxon>
        <taxon>Rubrobacterales</taxon>
        <taxon>Rubrobacteraceae</taxon>
        <taxon>Rubrobacter</taxon>
    </lineage>
</organism>